<accession>A6U253</accession>
<name>GRPE_STAA2</name>
<sequence length="208" mass="24022">MTNKDESVEKNTESTVEETNIKQNIDDSVEQAEESKGHLQDEAIEETSDENVIEEIDPKDQKINELQQLADENEEKYLRLYAEFENYKRRIQKENEINKTYQAQRVLTDILPAIDNIERALQIEGDDETFKSLQKGVQMVHESLINALKDNGLEVIKTEGEAFDPNIHQAVVQDDNPDFESGEITQELQKGYKLKDRVLRPSMVKVNQ</sequence>
<reference key="1">
    <citation type="submission" date="2007-06" db="EMBL/GenBank/DDBJ databases">
        <title>Complete sequence of chromosome of Staphylococcus aureus subsp. aureus JH1.</title>
        <authorList>
            <consortium name="US DOE Joint Genome Institute"/>
            <person name="Copeland A."/>
            <person name="Lucas S."/>
            <person name="Lapidus A."/>
            <person name="Barry K."/>
            <person name="Detter J.C."/>
            <person name="Glavina del Rio T."/>
            <person name="Hammon N."/>
            <person name="Israni S."/>
            <person name="Dalin E."/>
            <person name="Tice H."/>
            <person name="Pitluck S."/>
            <person name="Chain P."/>
            <person name="Malfatti S."/>
            <person name="Shin M."/>
            <person name="Vergez L."/>
            <person name="Schmutz J."/>
            <person name="Larimer F."/>
            <person name="Land M."/>
            <person name="Hauser L."/>
            <person name="Kyrpides N."/>
            <person name="Ivanova N."/>
            <person name="Tomasz A."/>
            <person name="Richardson P."/>
        </authorList>
    </citation>
    <scope>NUCLEOTIDE SEQUENCE [LARGE SCALE GENOMIC DNA]</scope>
    <source>
        <strain>JH1</strain>
    </source>
</reference>
<keyword id="KW-0143">Chaperone</keyword>
<keyword id="KW-0963">Cytoplasm</keyword>
<keyword id="KW-0346">Stress response</keyword>
<gene>
    <name evidence="1" type="primary">grpE</name>
    <name type="ordered locus">SaurJH1_1673</name>
</gene>
<protein>
    <recommendedName>
        <fullName evidence="1">Protein GrpE</fullName>
    </recommendedName>
    <alternativeName>
        <fullName evidence="1">HSP-70 cofactor</fullName>
    </alternativeName>
</protein>
<proteinExistence type="inferred from homology"/>
<comment type="function">
    <text evidence="1">Participates actively in the response to hyperosmotic and heat shock by preventing the aggregation of stress-denatured proteins, in association with DnaK and GrpE. It is the nucleotide exchange factor for DnaK and may function as a thermosensor. Unfolded proteins bind initially to DnaJ; upon interaction with the DnaJ-bound protein, DnaK hydrolyzes its bound ATP, resulting in the formation of a stable complex. GrpE releases ADP from DnaK; ATP binding to DnaK triggers the release of the substrate protein, thus completing the reaction cycle. Several rounds of ATP-dependent interactions between DnaJ, DnaK and GrpE are required for fully efficient folding.</text>
</comment>
<comment type="subunit">
    <text evidence="1">Homodimer.</text>
</comment>
<comment type="subcellular location">
    <subcellularLocation>
        <location evidence="1">Cytoplasm</location>
    </subcellularLocation>
</comment>
<comment type="similarity">
    <text evidence="1">Belongs to the GrpE family.</text>
</comment>
<organism>
    <name type="scientific">Staphylococcus aureus (strain JH1)</name>
    <dbReference type="NCBI Taxonomy" id="359787"/>
    <lineage>
        <taxon>Bacteria</taxon>
        <taxon>Bacillati</taxon>
        <taxon>Bacillota</taxon>
        <taxon>Bacilli</taxon>
        <taxon>Bacillales</taxon>
        <taxon>Staphylococcaceae</taxon>
        <taxon>Staphylococcus</taxon>
    </lineage>
</organism>
<dbReference type="EMBL" id="CP000736">
    <property type="protein sequence ID" value="ABR52521.1"/>
    <property type="molecule type" value="Genomic_DNA"/>
</dbReference>
<dbReference type="SMR" id="A6U253"/>
<dbReference type="KEGG" id="sah:SaurJH1_1673"/>
<dbReference type="HOGENOM" id="CLU_057217_6_3_9"/>
<dbReference type="GO" id="GO:0005737">
    <property type="term" value="C:cytoplasm"/>
    <property type="evidence" value="ECO:0007669"/>
    <property type="project" value="UniProtKB-SubCell"/>
</dbReference>
<dbReference type="GO" id="GO:0000774">
    <property type="term" value="F:adenyl-nucleotide exchange factor activity"/>
    <property type="evidence" value="ECO:0007669"/>
    <property type="project" value="InterPro"/>
</dbReference>
<dbReference type="GO" id="GO:0042803">
    <property type="term" value="F:protein homodimerization activity"/>
    <property type="evidence" value="ECO:0007669"/>
    <property type="project" value="InterPro"/>
</dbReference>
<dbReference type="GO" id="GO:0051087">
    <property type="term" value="F:protein-folding chaperone binding"/>
    <property type="evidence" value="ECO:0007669"/>
    <property type="project" value="InterPro"/>
</dbReference>
<dbReference type="GO" id="GO:0051082">
    <property type="term" value="F:unfolded protein binding"/>
    <property type="evidence" value="ECO:0007669"/>
    <property type="project" value="TreeGrafter"/>
</dbReference>
<dbReference type="GO" id="GO:0006457">
    <property type="term" value="P:protein folding"/>
    <property type="evidence" value="ECO:0007669"/>
    <property type="project" value="InterPro"/>
</dbReference>
<dbReference type="CDD" id="cd00446">
    <property type="entry name" value="GrpE"/>
    <property type="match status" value="1"/>
</dbReference>
<dbReference type="FunFam" id="2.30.22.10:FF:000001">
    <property type="entry name" value="Protein GrpE"/>
    <property type="match status" value="1"/>
</dbReference>
<dbReference type="FunFam" id="3.90.20.20:FF:000002">
    <property type="entry name" value="Protein GrpE"/>
    <property type="match status" value="1"/>
</dbReference>
<dbReference type="Gene3D" id="3.90.20.20">
    <property type="match status" value="1"/>
</dbReference>
<dbReference type="Gene3D" id="2.30.22.10">
    <property type="entry name" value="Head domain of nucleotide exchange factor GrpE"/>
    <property type="match status" value="1"/>
</dbReference>
<dbReference type="HAMAP" id="MF_01151">
    <property type="entry name" value="GrpE"/>
    <property type="match status" value="1"/>
</dbReference>
<dbReference type="InterPro" id="IPR000740">
    <property type="entry name" value="GrpE"/>
</dbReference>
<dbReference type="InterPro" id="IPR013805">
    <property type="entry name" value="GrpE_coiled_coil"/>
</dbReference>
<dbReference type="InterPro" id="IPR009012">
    <property type="entry name" value="GrpE_head"/>
</dbReference>
<dbReference type="NCBIfam" id="NF010738">
    <property type="entry name" value="PRK14140.1"/>
    <property type="match status" value="1"/>
</dbReference>
<dbReference type="PANTHER" id="PTHR21237">
    <property type="entry name" value="GRPE PROTEIN"/>
    <property type="match status" value="1"/>
</dbReference>
<dbReference type="PANTHER" id="PTHR21237:SF23">
    <property type="entry name" value="GRPE PROTEIN HOMOLOG, MITOCHONDRIAL"/>
    <property type="match status" value="1"/>
</dbReference>
<dbReference type="Pfam" id="PF01025">
    <property type="entry name" value="GrpE"/>
    <property type="match status" value="1"/>
</dbReference>
<dbReference type="PRINTS" id="PR00773">
    <property type="entry name" value="GRPEPROTEIN"/>
</dbReference>
<dbReference type="SUPFAM" id="SSF58014">
    <property type="entry name" value="Coiled-coil domain of nucleotide exchange factor GrpE"/>
    <property type="match status" value="1"/>
</dbReference>
<dbReference type="SUPFAM" id="SSF51064">
    <property type="entry name" value="Head domain of nucleotide exchange factor GrpE"/>
    <property type="match status" value="1"/>
</dbReference>
<dbReference type="PROSITE" id="PS01071">
    <property type="entry name" value="GRPE"/>
    <property type="match status" value="1"/>
</dbReference>
<feature type="chain" id="PRO_1000085126" description="Protein GrpE">
    <location>
        <begin position="1"/>
        <end position="208"/>
    </location>
</feature>
<feature type="region of interest" description="Disordered" evidence="2">
    <location>
        <begin position="1"/>
        <end position="59"/>
    </location>
</feature>
<feature type="compositionally biased region" description="Basic and acidic residues" evidence="2">
    <location>
        <begin position="1"/>
        <end position="12"/>
    </location>
</feature>
<feature type="compositionally biased region" description="Polar residues" evidence="2">
    <location>
        <begin position="13"/>
        <end position="23"/>
    </location>
</feature>
<feature type="compositionally biased region" description="Acidic residues" evidence="2">
    <location>
        <begin position="42"/>
        <end position="55"/>
    </location>
</feature>
<evidence type="ECO:0000255" key="1">
    <source>
        <dbReference type="HAMAP-Rule" id="MF_01151"/>
    </source>
</evidence>
<evidence type="ECO:0000256" key="2">
    <source>
        <dbReference type="SAM" id="MobiDB-lite"/>
    </source>
</evidence>